<name>RL33_BARHE</name>
<evidence type="ECO:0000255" key="1">
    <source>
        <dbReference type="HAMAP-Rule" id="MF_00294"/>
    </source>
</evidence>
<evidence type="ECO:0000305" key="2"/>
<sequence>MAKAATIKIKLLSTADTGFFYVTKKNSRTMTDKMSKRKYDPVVKKHVEFKETKIK</sequence>
<keyword id="KW-0687">Ribonucleoprotein</keyword>
<keyword id="KW-0689">Ribosomal protein</keyword>
<protein>
    <recommendedName>
        <fullName evidence="1">Large ribosomal subunit protein bL33</fullName>
    </recommendedName>
    <alternativeName>
        <fullName evidence="2">50S ribosomal protein L33</fullName>
    </alternativeName>
</protein>
<gene>
    <name evidence="1" type="primary">rpmG</name>
    <name type="ordered locus">BH08140</name>
</gene>
<organism>
    <name type="scientific">Bartonella henselae (strain ATCC 49882 / DSM 28221 / CCUG 30454 / Houston 1)</name>
    <name type="common">Rochalimaea henselae</name>
    <dbReference type="NCBI Taxonomy" id="283166"/>
    <lineage>
        <taxon>Bacteria</taxon>
        <taxon>Pseudomonadati</taxon>
        <taxon>Pseudomonadota</taxon>
        <taxon>Alphaproteobacteria</taxon>
        <taxon>Hyphomicrobiales</taxon>
        <taxon>Bartonellaceae</taxon>
        <taxon>Bartonella</taxon>
    </lineage>
</organism>
<dbReference type="EMBL" id="BX897699">
    <property type="protein sequence ID" value="CAF27613.1"/>
    <property type="molecule type" value="Genomic_DNA"/>
</dbReference>
<dbReference type="RefSeq" id="WP_004864083.1">
    <property type="nucleotide sequence ID" value="NZ_LRIJ02000001.1"/>
</dbReference>
<dbReference type="SMR" id="Q6G3F9"/>
<dbReference type="PaxDb" id="283166-BH08140"/>
<dbReference type="EnsemblBacteria" id="CAF27613">
    <property type="protein sequence ID" value="CAF27613"/>
    <property type="gene ID" value="BH08140"/>
</dbReference>
<dbReference type="GeneID" id="92985523"/>
<dbReference type="KEGG" id="bhe:BH08140"/>
<dbReference type="eggNOG" id="COG0267">
    <property type="taxonomic scope" value="Bacteria"/>
</dbReference>
<dbReference type="OrthoDB" id="21586at2"/>
<dbReference type="Proteomes" id="UP000000421">
    <property type="component" value="Chromosome"/>
</dbReference>
<dbReference type="GO" id="GO:0022625">
    <property type="term" value="C:cytosolic large ribosomal subunit"/>
    <property type="evidence" value="ECO:0007669"/>
    <property type="project" value="TreeGrafter"/>
</dbReference>
<dbReference type="GO" id="GO:0003735">
    <property type="term" value="F:structural constituent of ribosome"/>
    <property type="evidence" value="ECO:0007669"/>
    <property type="project" value="InterPro"/>
</dbReference>
<dbReference type="GO" id="GO:0006412">
    <property type="term" value="P:translation"/>
    <property type="evidence" value="ECO:0007669"/>
    <property type="project" value="UniProtKB-UniRule"/>
</dbReference>
<dbReference type="Gene3D" id="2.20.28.120">
    <property type="entry name" value="Ribosomal protein L33"/>
    <property type="match status" value="1"/>
</dbReference>
<dbReference type="HAMAP" id="MF_00294">
    <property type="entry name" value="Ribosomal_bL33"/>
    <property type="match status" value="1"/>
</dbReference>
<dbReference type="InterPro" id="IPR001705">
    <property type="entry name" value="Ribosomal_bL33"/>
</dbReference>
<dbReference type="InterPro" id="IPR018264">
    <property type="entry name" value="Ribosomal_bL33_CS"/>
</dbReference>
<dbReference type="InterPro" id="IPR038584">
    <property type="entry name" value="Ribosomal_bL33_sf"/>
</dbReference>
<dbReference type="InterPro" id="IPR011332">
    <property type="entry name" value="Ribosomal_zn-bd"/>
</dbReference>
<dbReference type="NCBIfam" id="NF001860">
    <property type="entry name" value="PRK00595.1"/>
    <property type="match status" value="1"/>
</dbReference>
<dbReference type="NCBIfam" id="TIGR01023">
    <property type="entry name" value="rpmG_bact"/>
    <property type="match status" value="1"/>
</dbReference>
<dbReference type="PANTHER" id="PTHR15238">
    <property type="entry name" value="54S RIBOSOMAL PROTEIN L39, MITOCHONDRIAL"/>
    <property type="match status" value="1"/>
</dbReference>
<dbReference type="PANTHER" id="PTHR15238:SF1">
    <property type="entry name" value="LARGE RIBOSOMAL SUBUNIT PROTEIN BL33M"/>
    <property type="match status" value="1"/>
</dbReference>
<dbReference type="Pfam" id="PF00471">
    <property type="entry name" value="Ribosomal_L33"/>
    <property type="match status" value="1"/>
</dbReference>
<dbReference type="SUPFAM" id="SSF57829">
    <property type="entry name" value="Zn-binding ribosomal proteins"/>
    <property type="match status" value="1"/>
</dbReference>
<dbReference type="PROSITE" id="PS00582">
    <property type="entry name" value="RIBOSOMAL_L33"/>
    <property type="match status" value="1"/>
</dbReference>
<accession>Q6G3F9</accession>
<feature type="chain" id="PRO_1000004146" description="Large ribosomal subunit protein bL33">
    <location>
        <begin position="1"/>
        <end position="55"/>
    </location>
</feature>
<reference key="1">
    <citation type="journal article" date="2004" name="Proc. Natl. Acad. Sci. U.S.A.">
        <title>The louse-borne human pathogen Bartonella quintana is a genomic derivative of the zoonotic agent Bartonella henselae.</title>
        <authorList>
            <person name="Alsmark U.C.M."/>
            <person name="Frank A.C."/>
            <person name="Karlberg E.O."/>
            <person name="Legault B.-A."/>
            <person name="Ardell D.H."/>
            <person name="Canbaeck B."/>
            <person name="Eriksson A.-S."/>
            <person name="Naeslund A.K."/>
            <person name="Handley S.A."/>
            <person name="Huvet M."/>
            <person name="La Scola B."/>
            <person name="Holmberg M."/>
            <person name="Andersson S.G.E."/>
        </authorList>
    </citation>
    <scope>NUCLEOTIDE SEQUENCE [LARGE SCALE GENOMIC DNA]</scope>
    <source>
        <strain>ATCC 49882 / DSM 28221 / CCUG 30454 / Houston 1</strain>
    </source>
</reference>
<comment type="similarity">
    <text evidence="1">Belongs to the bacterial ribosomal protein bL33 family.</text>
</comment>
<proteinExistence type="inferred from homology"/>